<dbReference type="EC" id="2.7.4.2"/>
<dbReference type="EMBL" id="AE006641">
    <property type="protein sequence ID" value="AAK43093.1"/>
    <property type="molecule type" value="Genomic_DNA"/>
</dbReference>
<dbReference type="PIR" id="F90479">
    <property type="entry name" value="F90479"/>
</dbReference>
<dbReference type="RefSeq" id="WP_009992639.1">
    <property type="nucleotide sequence ID" value="NC_002754.1"/>
</dbReference>
<dbReference type="SMR" id="Q97UL6"/>
<dbReference type="FunCoup" id="Q97UL6">
    <property type="interactions" value="49"/>
</dbReference>
<dbReference type="STRING" id="273057.SSO2988"/>
<dbReference type="PaxDb" id="273057-SSO2988"/>
<dbReference type="EnsemblBacteria" id="AAK43093">
    <property type="protein sequence ID" value="AAK43093"/>
    <property type="gene ID" value="SSO2988"/>
</dbReference>
<dbReference type="KEGG" id="sso:SSO2988"/>
<dbReference type="PATRIC" id="fig|273057.12.peg.3082"/>
<dbReference type="eggNOG" id="arCOG01032">
    <property type="taxonomic scope" value="Archaea"/>
</dbReference>
<dbReference type="HOGENOM" id="CLU_076270_0_0_2"/>
<dbReference type="InParanoid" id="Q97UL6"/>
<dbReference type="PhylomeDB" id="Q97UL6"/>
<dbReference type="BRENDA" id="2.7.4.2">
    <property type="organism ID" value="6163"/>
</dbReference>
<dbReference type="SABIO-RK" id="Q97UL6"/>
<dbReference type="UniPathway" id="UPA00057">
    <property type="reaction ID" value="UER00099"/>
</dbReference>
<dbReference type="Proteomes" id="UP000001974">
    <property type="component" value="Chromosome"/>
</dbReference>
<dbReference type="GO" id="GO:0005524">
    <property type="term" value="F:ATP binding"/>
    <property type="evidence" value="ECO:0007669"/>
    <property type="project" value="UniProtKB-KW"/>
</dbReference>
<dbReference type="GO" id="GO:0004631">
    <property type="term" value="F:phosphomevalonate kinase activity"/>
    <property type="evidence" value="ECO:0000318"/>
    <property type="project" value="GO_Central"/>
</dbReference>
<dbReference type="GO" id="GO:0010142">
    <property type="term" value="P:farnesyl diphosphate biosynthetic process, mevalonate pathway"/>
    <property type="evidence" value="ECO:0000318"/>
    <property type="project" value="GO_Central"/>
</dbReference>
<dbReference type="GO" id="GO:0019287">
    <property type="term" value="P:isopentenyl diphosphate biosynthetic process, mevalonate pathway"/>
    <property type="evidence" value="ECO:0000318"/>
    <property type="project" value="GO_Central"/>
</dbReference>
<dbReference type="FunFam" id="3.30.230.10:FF:000186">
    <property type="entry name" value="Phosphomevalonate kinase"/>
    <property type="match status" value="1"/>
</dbReference>
<dbReference type="Gene3D" id="3.30.230.10">
    <property type="match status" value="1"/>
</dbReference>
<dbReference type="Gene3D" id="3.30.70.890">
    <property type="entry name" value="GHMP kinase, C-terminal domain"/>
    <property type="match status" value="1"/>
</dbReference>
<dbReference type="InterPro" id="IPR053661">
    <property type="entry name" value="GHMP_kinase"/>
</dbReference>
<dbReference type="InterPro" id="IPR013750">
    <property type="entry name" value="GHMP_kinase_C_dom"/>
</dbReference>
<dbReference type="InterPro" id="IPR036554">
    <property type="entry name" value="GHMP_kinase_C_sf"/>
</dbReference>
<dbReference type="InterPro" id="IPR006204">
    <property type="entry name" value="GHMP_kinase_N_dom"/>
</dbReference>
<dbReference type="InterPro" id="IPR035102">
    <property type="entry name" value="Phosphomevalonate_kinase"/>
</dbReference>
<dbReference type="InterPro" id="IPR020568">
    <property type="entry name" value="Ribosomal_Su5_D2-typ_SF"/>
</dbReference>
<dbReference type="InterPro" id="IPR014721">
    <property type="entry name" value="Ribsml_uS5_D2-typ_fold_subgr"/>
</dbReference>
<dbReference type="NCBIfam" id="NF040957">
    <property type="entry name" value="Arch_PMK"/>
    <property type="match status" value="1"/>
</dbReference>
<dbReference type="PANTHER" id="PTHR31814">
    <property type="match status" value="1"/>
</dbReference>
<dbReference type="PANTHER" id="PTHR31814:SF2">
    <property type="entry name" value="PHOSPHOMEVALONATE KINASE"/>
    <property type="match status" value="1"/>
</dbReference>
<dbReference type="Pfam" id="PF08544">
    <property type="entry name" value="GHMP_kinases_C"/>
    <property type="match status" value="1"/>
</dbReference>
<dbReference type="Pfam" id="PF00288">
    <property type="entry name" value="GHMP_kinases_N"/>
    <property type="match status" value="1"/>
</dbReference>
<dbReference type="SUPFAM" id="SSF55060">
    <property type="entry name" value="GHMP Kinase, C-terminal domain"/>
    <property type="match status" value="1"/>
</dbReference>
<dbReference type="SUPFAM" id="SSF54211">
    <property type="entry name" value="Ribosomal protein S5 domain 2-like"/>
    <property type="match status" value="1"/>
</dbReference>
<comment type="function">
    <text evidence="2">Catalyzes the phosphorylation of (R)-mevalonate 5-phosphate (MVAP) to (R)-mevalonate 5-diphosphate (MVAPP). Functions in the mevalonate (MVA) pathway leading to isopentenyl diphosphate (IPP), a key precursor for the biosynthesis of isoprenoid compounds such as archaeal membrane lipids.</text>
</comment>
<comment type="catalytic activity">
    <reaction evidence="2">
        <text>(R)-5-phosphomevalonate + ATP = (R)-5-diphosphomevalonate + ADP</text>
        <dbReference type="Rhea" id="RHEA:16341"/>
        <dbReference type="ChEBI" id="CHEBI:30616"/>
        <dbReference type="ChEBI" id="CHEBI:57557"/>
        <dbReference type="ChEBI" id="CHEBI:58146"/>
        <dbReference type="ChEBI" id="CHEBI:456216"/>
        <dbReference type="EC" id="2.7.4.2"/>
    </reaction>
</comment>
<comment type="cofactor">
    <cofactor evidence="1">
        <name>Mg(2+)</name>
        <dbReference type="ChEBI" id="CHEBI:18420"/>
    </cofactor>
</comment>
<comment type="biophysicochemical properties">
    <kinetics>
        <KM evidence="2">77 uM for (R,S)-5-phosphomevalonate (at 37 degrees Celsius)</KM>
        <Vmax evidence="2">5.1 umol/min/mg enzyme (at 37 degrees Celsius)</Vmax>
    </kinetics>
</comment>
<comment type="pathway">
    <text evidence="2">Isoprenoid biosynthesis; isopentenyl diphosphate biosynthesis via mevalonate pathway; isopentenyl diphosphate from (R)-mevalonate: step 2/3.</text>
</comment>
<comment type="subunit">
    <text evidence="1">Homodimer.</text>
</comment>
<comment type="similarity">
    <text evidence="3">Belongs to the GHMP kinase family.</text>
</comment>
<gene>
    <name type="ordered locus">SSO2988</name>
</gene>
<feature type="chain" id="PRO_0000429455" description="Phosphomevalonate kinase">
    <location>
        <begin position="1"/>
        <end position="323"/>
    </location>
</feature>
<proteinExistence type="evidence at protein level"/>
<evidence type="ECO:0000250" key="1"/>
<evidence type="ECO:0000269" key="2">
    <source>
    </source>
</evidence>
<evidence type="ECO:0000305" key="3"/>
<protein>
    <recommendedName>
        <fullName>Phosphomevalonate kinase</fullName>
        <shortName>PMK</shortName>
        <ecNumber>2.7.4.2</ecNumber>
    </recommendedName>
</protein>
<accession>Q97UL6</accession>
<keyword id="KW-0067">ATP-binding</keyword>
<keyword id="KW-0414">Isoprene biosynthesis</keyword>
<keyword id="KW-0418">Kinase</keyword>
<keyword id="KW-0444">Lipid biosynthesis</keyword>
<keyword id="KW-0443">Lipid metabolism</keyword>
<keyword id="KW-0460">Magnesium</keyword>
<keyword id="KW-0547">Nucleotide-binding</keyword>
<keyword id="KW-1185">Reference proteome</keyword>
<keyword id="KW-0808">Transferase</keyword>
<sequence length="323" mass="36208">MIKVSAPGKILWIGSYSVVFGGISHVIAVNKRVSCSLREIKEKDSLIFHTSYGHFKNSGNELINSVLDTFRERLSQLPQGYEIDLYNDKEFIIDGKKTGLGSSSAATVSLTACLYYAIHGKLDLFEIHKLAQIANYKRQKGIGSGFDIASAVFGSIVYKRFTDLDKMDFYFEKLNLGNYDMMLGFTGKSSETVGLVRKFVEKSNLDDFKEIMRLIDEENYMAIKLIKLNKLDEAVEHIKLGRKYLNYIAERIVGVKLVSKMEEELIKIAEEEGALVALSPGAGGGDSIFALGNDLNRVREAWSKRGIFIIDVKEDEGLRLESN</sequence>
<organism>
    <name type="scientific">Saccharolobus solfataricus (strain ATCC 35092 / DSM 1617 / JCM 11322 / P2)</name>
    <name type="common">Sulfolobus solfataricus</name>
    <dbReference type="NCBI Taxonomy" id="273057"/>
    <lineage>
        <taxon>Archaea</taxon>
        <taxon>Thermoproteota</taxon>
        <taxon>Thermoprotei</taxon>
        <taxon>Sulfolobales</taxon>
        <taxon>Sulfolobaceae</taxon>
        <taxon>Saccharolobus</taxon>
    </lineage>
</organism>
<name>PMK_SACS2</name>
<reference key="1">
    <citation type="journal article" date="2001" name="Proc. Natl. Acad. Sci. U.S.A.">
        <title>The complete genome of the crenarchaeon Sulfolobus solfataricus P2.</title>
        <authorList>
            <person name="She Q."/>
            <person name="Singh R.K."/>
            <person name="Confalonieri F."/>
            <person name="Zivanovic Y."/>
            <person name="Allard G."/>
            <person name="Awayez M.J."/>
            <person name="Chan-Weiher C.C.-Y."/>
            <person name="Clausen I.G."/>
            <person name="Curtis B.A."/>
            <person name="De Moors A."/>
            <person name="Erauso G."/>
            <person name="Fletcher C."/>
            <person name="Gordon P.M.K."/>
            <person name="Heikamp-de Jong I."/>
            <person name="Jeffries A.C."/>
            <person name="Kozera C.J."/>
            <person name="Medina N."/>
            <person name="Peng X."/>
            <person name="Thi-Ngoc H.P."/>
            <person name="Redder P."/>
            <person name="Schenk M.E."/>
            <person name="Theriault C."/>
            <person name="Tolstrup N."/>
            <person name="Charlebois R.L."/>
            <person name="Doolittle W.F."/>
            <person name="Duguet M."/>
            <person name="Gaasterland T."/>
            <person name="Garrett R.A."/>
            <person name="Ragan M.A."/>
            <person name="Sensen C.W."/>
            <person name="Van der Oost J."/>
        </authorList>
    </citation>
    <scope>NUCLEOTIDE SEQUENCE [LARGE SCALE GENOMIC DNA]</scope>
    <source>
        <strain>ATCC 35092 / DSM 1617 / JCM 11322 / P2</strain>
    </source>
</reference>
<reference key="2">
    <citation type="journal article" date="2013" name="J. Biochem.">
        <title>Biochemical evidence supporting the presence of the classical mevalonate pathway in the thermoacidophilic archaeon Sulfolobus solfataricus.</title>
        <authorList>
            <person name="Nishimura H."/>
            <person name="Azami Y."/>
            <person name="Miyagawa M."/>
            <person name="Hashimoto C."/>
            <person name="Yoshimura T."/>
            <person name="Hemmi H."/>
        </authorList>
    </citation>
    <scope>FUNCTION</scope>
    <scope>CATALYTIC ACTIVITY</scope>
    <scope>KINETIC PARAMETERS</scope>
    <scope>PATHWAY</scope>
    <source>
        <strain>ATCC 35092 / DSM 1617 / JCM 11322 / P2</strain>
    </source>
</reference>